<dbReference type="EC" id="3.6.1.27" evidence="1"/>
<dbReference type="EMBL" id="AE014292">
    <property type="protein sequence ID" value="AAN34209.1"/>
    <property type="molecule type" value="Genomic_DNA"/>
</dbReference>
<dbReference type="EMBL" id="CP002998">
    <property type="protein sequence ID" value="AEM20486.1"/>
    <property type="molecule type" value="Genomic_DNA"/>
</dbReference>
<dbReference type="RefSeq" id="WP_002965610.1">
    <property type="nucleotide sequence ID" value="NZ_KN046805.1"/>
</dbReference>
<dbReference type="SMR" id="P67385"/>
<dbReference type="KEGG" id="bms:BRA1042"/>
<dbReference type="KEGG" id="bsi:BS1330_II1034"/>
<dbReference type="PATRIC" id="fig|204722.22.peg.2634"/>
<dbReference type="HOGENOM" id="CLU_060296_2_0_5"/>
<dbReference type="PhylomeDB" id="P67385"/>
<dbReference type="Proteomes" id="UP000007104">
    <property type="component" value="Chromosome II"/>
</dbReference>
<dbReference type="GO" id="GO:0005886">
    <property type="term" value="C:plasma membrane"/>
    <property type="evidence" value="ECO:0007669"/>
    <property type="project" value="UniProtKB-SubCell"/>
</dbReference>
<dbReference type="GO" id="GO:0050380">
    <property type="term" value="F:undecaprenyl-diphosphatase activity"/>
    <property type="evidence" value="ECO:0007669"/>
    <property type="project" value="UniProtKB-UniRule"/>
</dbReference>
<dbReference type="GO" id="GO:0071555">
    <property type="term" value="P:cell wall organization"/>
    <property type="evidence" value="ECO:0007669"/>
    <property type="project" value="UniProtKB-KW"/>
</dbReference>
<dbReference type="GO" id="GO:0009252">
    <property type="term" value="P:peptidoglycan biosynthetic process"/>
    <property type="evidence" value="ECO:0007669"/>
    <property type="project" value="UniProtKB-KW"/>
</dbReference>
<dbReference type="GO" id="GO:0008360">
    <property type="term" value="P:regulation of cell shape"/>
    <property type="evidence" value="ECO:0007669"/>
    <property type="project" value="UniProtKB-KW"/>
</dbReference>
<dbReference type="GO" id="GO:0046677">
    <property type="term" value="P:response to antibiotic"/>
    <property type="evidence" value="ECO:0007669"/>
    <property type="project" value="UniProtKB-UniRule"/>
</dbReference>
<dbReference type="HAMAP" id="MF_01006">
    <property type="entry name" value="Undec_diphosphatase"/>
    <property type="match status" value="1"/>
</dbReference>
<dbReference type="InterPro" id="IPR003824">
    <property type="entry name" value="UppP"/>
</dbReference>
<dbReference type="NCBIfam" id="NF001389">
    <property type="entry name" value="PRK00281.1-2"/>
    <property type="match status" value="1"/>
</dbReference>
<dbReference type="NCBIfam" id="TIGR00753">
    <property type="entry name" value="undec_PP_bacA"/>
    <property type="match status" value="1"/>
</dbReference>
<dbReference type="PANTHER" id="PTHR30622">
    <property type="entry name" value="UNDECAPRENYL-DIPHOSPHATASE"/>
    <property type="match status" value="1"/>
</dbReference>
<dbReference type="PANTHER" id="PTHR30622:SF3">
    <property type="entry name" value="UNDECAPRENYL-DIPHOSPHATASE"/>
    <property type="match status" value="1"/>
</dbReference>
<dbReference type="Pfam" id="PF02673">
    <property type="entry name" value="BacA"/>
    <property type="match status" value="1"/>
</dbReference>
<accession>P67385</accession>
<accession>G0KE48</accession>
<accession>Q8YDC0</accession>
<sequence length="268" mass="29169">MDFFNLLEAAFLGLIEGLTEFIPVSSTGHLLLIGHFLGFESTGKTFEVLIQLGAILAILSVYSAKLARIATDFPRDARTRRFVLGVLVAFLPAAVIGALAHGFIKGVLFETPMLVCIMLIVGGFILLWVDQLNLRPRYHNVMDYPLPICLAIGFIQCLAMIPGVSRSGSTIVGSLLLGADKRSAAEFSFFLAMPTMAGAFAYDLFKSRNILSFNDGALIVVGFIMAFISGVFVVRHLLDYVSRHGFALFGWWRLIVGSAGMAALIIWG</sequence>
<organism>
    <name type="scientific">Brucella suis biovar 1 (strain 1330)</name>
    <dbReference type="NCBI Taxonomy" id="204722"/>
    <lineage>
        <taxon>Bacteria</taxon>
        <taxon>Pseudomonadati</taxon>
        <taxon>Pseudomonadota</taxon>
        <taxon>Alphaproteobacteria</taxon>
        <taxon>Hyphomicrobiales</taxon>
        <taxon>Brucellaceae</taxon>
        <taxon>Brucella/Ochrobactrum group</taxon>
        <taxon>Brucella</taxon>
    </lineage>
</organism>
<evidence type="ECO:0000255" key="1">
    <source>
        <dbReference type="HAMAP-Rule" id="MF_01006"/>
    </source>
</evidence>
<reference key="1">
    <citation type="journal article" date="2002" name="Proc. Natl. Acad. Sci. U.S.A.">
        <title>The Brucella suis genome reveals fundamental similarities between animal and plant pathogens and symbionts.</title>
        <authorList>
            <person name="Paulsen I.T."/>
            <person name="Seshadri R."/>
            <person name="Nelson K.E."/>
            <person name="Eisen J.A."/>
            <person name="Heidelberg J.F."/>
            <person name="Read T.D."/>
            <person name="Dodson R.J."/>
            <person name="Umayam L.A."/>
            <person name="Brinkac L.M."/>
            <person name="Beanan M.J."/>
            <person name="Daugherty S.C."/>
            <person name="DeBoy R.T."/>
            <person name="Durkin A.S."/>
            <person name="Kolonay J.F."/>
            <person name="Madupu R."/>
            <person name="Nelson W.C."/>
            <person name="Ayodeji B."/>
            <person name="Kraul M."/>
            <person name="Shetty J."/>
            <person name="Malek J.A."/>
            <person name="Van Aken S.E."/>
            <person name="Riedmuller S."/>
            <person name="Tettelin H."/>
            <person name="Gill S.R."/>
            <person name="White O."/>
            <person name="Salzberg S.L."/>
            <person name="Hoover D.L."/>
            <person name="Lindler L.E."/>
            <person name="Halling S.M."/>
            <person name="Boyle S.M."/>
            <person name="Fraser C.M."/>
        </authorList>
    </citation>
    <scope>NUCLEOTIDE SEQUENCE [LARGE SCALE GENOMIC DNA]</scope>
    <source>
        <strain>1330</strain>
    </source>
</reference>
<reference key="2">
    <citation type="journal article" date="2011" name="J. Bacteriol.">
        <title>Revised genome sequence of Brucella suis 1330.</title>
        <authorList>
            <person name="Tae H."/>
            <person name="Shallom S."/>
            <person name="Settlage R."/>
            <person name="Preston D."/>
            <person name="Adams L.G."/>
            <person name="Garner H.R."/>
        </authorList>
    </citation>
    <scope>NUCLEOTIDE SEQUENCE [LARGE SCALE GENOMIC DNA]</scope>
    <source>
        <strain>1330</strain>
    </source>
</reference>
<feature type="chain" id="PRO_0000151121" description="Undecaprenyl-diphosphatase">
    <location>
        <begin position="1"/>
        <end position="268"/>
    </location>
</feature>
<feature type="transmembrane region" description="Helical" evidence="1">
    <location>
        <begin position="3"/>
        <end position="23"/>
    </location>
</feature>
<feature type="transmembrane region" description="Helical" evidence="1">
    <location>
        <begin position="46"/>
        <end position="66"/>
    </location>
</feature>
<feature type="transmembrane region" description="Helical" evidence="1">
    <location>
        <begin position="84"/>
        <end position="104"/>
    </location>
</feature>
<feature type="transmembrane region" description="Helical" evidence="1">
    <location>
        <begin position="107"/>
        <end position="127"/>
    </location>
</feature>
<feature type="transmembrane region" description="Helical" evidence="1">
    <location>
        <begin position="144"/>
        <end position="164"/>
    </location>
</feature>
<feature type="transmembrane region" description="Helical" evidence="1">
    <location>
        <begin position="185"/>
        <end position="205"/>
    </location>
</feature>
<feature type="transmembrane region" description="Helical" evidence="1">
    <location>
        <begin position="213"/>
        <end position="233"/>
    </location>
</feature>
<feature type="transmembrane region" description="Helical" evidence="1">
    <location>
        <begin position="246"/>
        <end position="266"/>
    </location>
</feature>
<comment type="function">
    <text evidence="1">Catalyzes the dephosphorylation of undecaprenyl diphosphate (UPP). Confers resistance to bacitracin.</text>
</comment>
<comment type="catalytic activity">
    <reaction evidence="1">
        <text>di-trans,octa-cis-undecaprenyl diphosphate + H2O = di-trans,octa-cis-undecaprenyl phosphate + phosphate + H(+)</text>
        <dbReference type="Rhea" id="RHEA:28094"/>
        <dbReference type="ChEBI" id="CHEBI:15377"/>
        <dbReference type="ChEBI" id="CHEBI:15378"/>
        <dbReference type="ChEBI" id="CHEBI:43474"/>
        <dbReference type="ChEBI" id="CHEBI:58405"/>
        <dbReference type="ChEBI" id="CHEBI:60392"/>
        <dbReference type="EC" id="3.6.1.27"/>
    </reaction>
</comment>
<comment type="subcellular location">
    <subcellularLocation>
        <location evidence="1">Cell inner membrane</location>
        <topology evidence="1">Multi-pass membrane protein</topology>
    </subcellularLocation>
</comment>
<comment type="miscellaneous">
    <text>Bacitracin is thought to be involved in the inhibition of peptidoglycan synthesis by sequestering undecaprenyl diphosphate, thereby reducing the pool of lipid carrier available.</text>
</comment>
<comment type="similarity">
    <text evidence="1">Belongs to the UppP family.</text>
</comment>
<name>UPPP_BRUSU</name>
<keyword id="KW-0046">Antibiotic resistance</keyword>
<keyword id="KW-0997">Cell inner membrane</keyword>
<keyword id="KW-1003">Cell membrane</keyword>
<keyword id="KW-0133">Cell shape</keyword>
<keyword id="KW-0961">Cell wall biogenesis/degradation</keyword>
<keyword id="KW-0378">Hydrolase</keyword>
<keyword id="KW-0472">Membrane</keyword>
<keyword id="KW-0573">Peptidoglycan synthesis</keyword>
<keyword id="KW-0812">Transmembrane</keyword>
<keyword id="KW-1133">Transmembrane helix</keyword>
<protein>
    <recommendedName>
        <fullName evidence="1">Undecaprenyl-diphosphatase</fullName>
        <ecNumber evidence="1">3.6.1.27</ecNumber>
    </recommendedName>
    <alternativeName>
        <fullName evidence="1">Bacitracin resistance protein</fullName>
    </alternativeName>
    <alternativeName>
        <fullName evidence="1">Undecaprenyl pyrophosphate phosphatase</fullName>
    </alternativeName>
</protein>
<gene>
    <name evidence="1" type="primary">uppP</name>
    <name type="synonym">bacA</name>
    <name type="synonym">upk</name>
    <name type="ordered locus">BRA1042</name>
    <name type="ordered locus">BS1330_II1034</name>
</gene>
<proteinExistence type="inferred from homology"/>